<comment type="catalytic activity">
    <reaction evidence="1">
        <text>a (3S)-3-hydroxyacyl-CoA = a (2E)-enoyl-CoA + H2O</text>
        <dbReference type="Rhea" id="RHEA:16105"/>
        <dbReference type="ChEBI" id="CHEBI:15377"/>
        <dbReference type="ChEBI" id="CHEBI:57318"/>
        <dbReference type="ChEBI" id="CHEBI:58856"/>
        <dbReference type="EC" id="4.2.1.17"/>
    </reaction>
</comment>
<comment type="catalytic activity">
    <reaction evidence="1">
        <text>a 4-saturated-(3S)-3-hydroxyacyl-CoA = a (3E)-enoyl-CoA + H2O</text>
        <dbReference type="Rhea" id="RHEA:20724"/>
        <dbReference type="ChEBI" id="CHEBI:15377"/>
        <dbReference type="ChEBI" id="CHEBI:58521"/>
        <dbReference type="ChEBI" id="CHEBI:137480"/>
        <dbReference type="EC" id="4.2.1.17"/>
    </reaction>
</comment>
<comment type="catalytic activity">
    <reaction evidence="1">
        <text>a (3Z)-enoyl-CoA = a 4-saturated (2E)-enoyl-CoA</text>
        <dbReference type="Rhea" id="RHEA:45900"/>
        <dbReference type="ChEBI" id="CHEBI:85097"/>
        <dbReference type="ChEBI" id="CHEBI:85489"/>
        <dbReference type="EC" id="5.3.3.8"/>
    </reaction>
</comment>
<comment type="catalytic activity">
    <reaction evidence="1">
        <text>a (3E)-enoyl-CoA = a 4-saturated (2E)-enoyl-CoA</text>
        <dbReference type="Rhea" id="RHEA:45228"/>
        <dbReference type="ChEBI" id="CHEBI:58521"/>
        <dbReference type="ChEBI" id="CHEBI:85097"/>
        <dbReference type="EC" id="5.3.3.8"/>
    </reaction>
</comment>
<comment type="catalytic activity">
    <reaction evidence="1">
        <text>(3S)-3-hydroxybutanoyl-CoA = (3R)-3-hydroxybutanoyl-CoA</text>
        <dbReference type="Rhea" id="RHEA:21760"/>
        <dbReference type="ChEBI" id="CHEBI:57315"/>
        <dbReference type="ChEBI" id="CHEBI:57316"/>
        <dbReference type="EC" id="5.1.2.3"/>
    </reaction>
</comment>
<comment type="catalytic activity">
    <reaction evidence="1">
        <text>a (3S)-3-hydroxyacyl-CoA + NAD(+) = a 3-oxoacyl-CoA + NADH + H(+)</text>
        <dbReference type="Rhea" id="RHEA:22432"/>
        <dbReference type="ChEBI" id="CHEBI:15378"/>
        <dbReference type="ChEBI" id="CHEBI:57318"/>
        <dbReference type="ChEBI" id="CHEBI:57540"/>
        <dbReference type="ChEBI" id="CHEBI:57945"/>
        <dbReference type="ChEBI" id="CHEBI:90726"/>
        <dbReference type="EC" id="1.1.1.35"/>
    </reaction>
</comment>
<comment type="pathway">
    <text>Lipid metabolism; fatty acid beta-oxidation.</text>
</comment>
<comment type="subcellular location">
    <subcellularLocation>
        <location evidence="1">Glyoxysome</location>
    </subcellularLocation>
</comment>
<comment type="domain">
    <text evidence="1">The epimerase and isomerase activities are contained in the N-terminal region while the dehydrogenase activity is in the C-terminal region.</text>
</comment>
<comment type="similarity">
    <text evidence="2">In the N-terminal section; belongs to the enoyl-CoA hydratase/isomerase family.</text>
</comment>
<comment type="similarity">
    <text evidence="2">In the central section; belongs to the 3-hydroxyacyl-CoA dehydrogenase family.</text>
</comment>
<keyword id="KW-0276">Fatty acid metabolism</keyword>
<keyword id="KW-0330">Glyoxysome</keyword>
<keyword id="KW-0413">Isomerase</keyword>
<keyword id="KW-0443">Lipid metabolism</keyword>
<keyword id="KW-0456">Lyase</keyword>
<keyword id="KW-0511">Multifunctional enzyme</keyword>
<keyword id="KW-0520">NAD</keyword>
<keyword id="KW-0560">Oxidoreductase</keyword>
<keyword id="KW-0576">Peroxisome</keyword>
<accession>Q39659</accession>
<name>MFPA_CUCSA</name>
<sequence length="725" mass="79170">MGSNAKGRTVMEVGTDGVAIITIINPPVNSLSFDVLFSLRDSYEQALRRDDVKAIVVTGAKGKFSGGFDITAFGVLQGGKGEQPNVRNISIEMITDIFEAARKPAVAAIDGLALGGGLEVAMACHARISTPTAQLGLPELQLGIIPGFGGTQRLPRLVGLSKALEMMLTSKPIKGQEAHSLGLVDAIVPPEELINTARRWALEILERRRPWVHSLHRTDKLESLAEARKIFNLARAQAKKQYPNLKHTIACIDAVETGVVSGPRAGLWKEAEEFQGLLHSDTCKSLIHIFFAQRSTTKVPGVTDLGLVPRQIKKVAIVGGGLMGSGIATALILSNYHVVLKEVNDKFLQAGIDRVRANLQSRVKKGNMTNEKFEKSISLLKGVLNYESFKDVDMVIEAVIENVSLKQQIFSDLEKYCPPHCMLATNTSTIDLELIGERIKSRDRIIGAHFFSPAHIMPLLEIVRTKHTAAQVIVDLLDVGKNIKKTPVVVGNCTGFAVNRMFFPYSQAAILLAEHGVDPYQIDRAISKFGMPMGPFRLCDLVGFGVAAATASQFVQAFPERTYKSMLIPLMQEDKNAGESTRKGFYVYDKNRKAGPNPELKKYIEKARNSSGVSVDPKLTKLPEKDIVEMIFFPVVNEACRVLAEGIAVKAADLDIAGVMGMGFPSYRGGLMFWADSLGSNYIYSRLEEWSKQYGGFFKPCGYLAERAVQGATLSAPGGHAKPRM</sequence>
<organism evidence="3">
    <name type="scientific">Cucumis sativus</name>
    <name type="common">Cucumber</name>
    <dbReference type="NCBI Taxonomy" id="3659"/>
    <lineage>
        <taxon>Eukaryota</taxon>
        <taxon>Viridiplantae</taxon>
        <taxon>Streptophyta</taxon>
        <taxon>Embryophyta</taxon>
        <taxon>Tracheophyta</taxon>
        <taxon>Spermatophyta</taxon>
        <taxon>Magnoliopsida</taxon>
        <taxon>eudicotyledons</taxon>
        <taxon>Gunneridae</taxon>
        <taxon>Pentapetalae</taxon>
        <taxon>rosids</taxon>
        <taxon>fabids</taxon>
        <taxon>Cucurbitales</taxon>
        <taxon>Cucurbitaceae</taxon>
        <taxon>Benincaseae</taxon>
        <taxon>Cucumis</taxon>
    </lineage>
</organism>
<feature type="chain" id="PRO_0000109251" description="Glyoxysomal fatty acid beta-oxidation multifunctional protein MFP-a">
    <location>
        <begin position="1"/>
        <end position="725"/>
    </location>
</feature>
<protein>
    <recommendedName>
        <fullName>Glyoxysomal fatty acid beta-oxidation multifunctional protein MFP-a</fullName>
    </recommendedName>
    <domain>
        <recommendedName>
            <fullName>Enoyl-CoA hydratase/3-2-trans-enoyl-CoA isomerase/3-hydroxybutyryl-CoA epimerase</fullName>
            <ecNumber>4.2.1.17</ecNumber>
            <ecNumber>5.1.2.3</ecNumber>
            <ecNumber>5.3.3.8</ecNumber>
        </recommendedName>
    </domain>
    <domain>
        <recommendedName>
            <fullName>3-hydroxyacyl-CoA dehydrogenase</fullName>
            <ecNumber>1.1.1.35</ecNumber>
        </recommendedName>
    </domain>
</protein>
<reference evidence="2" key="1">
    <citation type="journal article" date="1994" name="J. Biol. Chem.">
        <title>Domains of the tetrafunctional protein acting in glyoxysomal fatty acid beta oxidation. Demonstration of epimerase and isomerase activities on a peptide lacking hydratase activity.</title>
        <authorList>
            <person name="Preisig-Mueller R."/>
            <person name="Guehnemann-Schaefer K."/>
            <person name="Kindl H."/>
        </authorList>
    </citation>
    <scope>NUCLEOTIDE SEQUENCE [MRNA]</scope>
    <scope>CATALYTIC ACTIVITY</scope>
    <scope>SUBCELLULAR LOCATION</scope>
    <source>
        <tissue>Seedling cotyledon</tissue>
    </source>
</reference>
<proteinExistence type="evidence at protein level"/>
<dbReference type="EC" id="4.2.1.17"/>
<dbReference type="EC" id="5.1.2.3"/>
<dbReference type="EC" id="5.3.3.8"/>
<dbReference type="EC" id="1.1.1.35"/>
<dbReference type="EMBL" id="X78996">
    <property type="protein sequence ID" value="CAA55630.1"/>
    <property type="molecule type" value="mRNA"/>
</dbReference>
<dbReference type="PIR" id="T10464">
    <property type="entry name" value="T10464"/>
</dbReference>
<dbReference type="RefSeq" id="NP_001292693.1">
    <property type="nucleotide sequence ID" value="NM_001305764.1"/>
</dbReference>
<dbReference type="SMR" id="Q39659"/>
<dbReference type="GeneID" id="101210295"/>
<dbReference type="KEGG" id="csv:101210295"/>
<dbReference type="eggNOG" id="KOG1683">
    <property type="taxonomic scope" value="Eukaryota"/>
</dbReference>
<dbReference type="OrthoDB" id="2018133at2759"/>
<dbReference type="UniPathway" id="UPA00659"/>
<dbReference type="GO" id="GO:0009514">
    <property type="term" value="C:glyoxysome"/>
    <property type="evidence" value="ECO:0000303"/>
    <property type="project" value="UniProtKB"/>
</dbReference>
<dbReference type="GO" id="GO:0018812">
    <property type="term" value="F:3-hydroxyacyl-CoA dehydratase activity"/>
    <property type="evidence" value="ECO:0000314"/>
    <property type="project" value="UniProtKB"/>
</dbReference>
<dbReference type="GO" id="GO:0003857">
    <property type="term" value="F:3-hydroxyacyl-CoA dehydrogenase activity"/>
    <property type="evidence" value="ECO:0007669"/>
    <property type="project" value="UniProtKB-EC"/>
</dbReference>
<dbReference type="GO" id="GO:0008692">
    <property type="term" value="F:3-hydroxybutyryl-CoA epimerase activity"/>
    <property type="evidence" value="ECO:0000314"/>
    <property type="project" value="UniProtKB"/>
</dbReference>
<dbReference type="GO" id="GO:0004165">
    <property type="term" value="F:delta(3)-delta(2)-enoyl-CoA isomerase activity"/>
    <property type="evidence" value="ECO:0000314"/>
    <property type="project" value="UniProtKB"/>
</dbReference>
<dbReference type="GO" id="GO:0004300">
    <property type="term" value="F:enoyl-CoA hydratase activity"/>
    <property type="evidence" value="ECO:0000314"/>
    <property type="project" value="UniProtKB"/>
</dbReference>
<dbReference type="GO" id="GO:0070403">
    <property type="term" value="F:NAD+ binding"/>
    <property type="evidence" value="ECO:0007669"/>
    <property type="project" value="InterPro"/>
</dbReference>
<dbReference type="GO" id="GO:0006635">
    <property type="term" value="P:fatty acid beta-oxidation"/>
    <property type="evidence" value="ECO:0000314"/>
    <property type="project" value="UniProtKB"/>
</dbReference>
<dbReference type="CDD" id="cd06558">
    <property type="entry name" value="crotonase-like"/>
    <property type="match status" value="1"/>
</dbReference>
<dbReference type="FunFam" id="3.40.50.720:FF:000009">
    <property type="entry name" value="Fatty oxidation complex, alpha subunit"/>
    <property type="match status" value="1"/>
</dbReference>
<dbReference type="FunFam" id="1.10.1040.50:FF:000004">
    <property type="entry name" value="Peroxisomal fatty acid beta-oxidation multifunctional protein"/>
    <property type="match status" value="1"/>
</dbReference>
<dbReference type="FunFam" id="3.90.226.10:FF:000025">
    <property type="entry name" value="Peroxisomal fatty acid beta-oxidation multifunctional protein"/>
    <property type="match status" value="1"/>
</dbReference>
<dbReference type="Gene3D" id="1.10.1040.50">
    <property type="match status" value="1"/>
</dbReference>
<dbReference type="Gene3D" id="3.90.226.10">
    <property type="entry name" value="2-enoyl-CoA Hydratase, Chain A, domain 1"/>
    <property type="match status" value="1"/>
</dbReference>
<dbReference type="Gene3D" id="3.40.50.720">
    <property type="entry name" value="NAD(P)-binding Rossmann-like Domain"/>
    <property type="match status" value="1"/>
</dbReference>
<dbReference type="InterPro" id="IPR006180">
    <property type="entry name" value="3-OHacyl-CoA_DH_CS"/>
</dbReference>
<dbReference type="InterPro" id="IPR006176">
    <property type="entry name" value="3-OHacyl-CoA_DH_NAD-bd"/>
</dbReference>
<dbReference type="InterPro" id="IPR006108">
    <property type="entry name" value="3HC_DH_C"/>
</dbReference>
<dbReference type="InterPro" id="IPR008927">
    <property type="entry name" value="6-PGluconate_DH-like_C_sf"/>
</dbReference>
<dbReference type="InterPro" id="IPR029045">
    <property type="entry name" value="ClpP/crotonase-like_dom_sf"/>
</dbReference>
<dbReference type="InterPro" id="IPR018376">
    <property type="entry name" value="Enoyl-CoA_hyd/isom_CS"/>
</dbReference>
<dbReference type="InterPro" id="IPR001753">
    <property type="entry name" value="Enoyl-CoA_hydra/iso"/>
</dbReference>
<dbReference type="InterPro" id="IPR036291">
    <property type="entry name" value="NAD(P)-bd_dom_sf"/>
</dbReference>
<dbReference type="PANTHER" id="PTHR23309">
    <property type="entry name" value="3-HYDROXYACYL-COA DEHYROGENASE"/>
    <property type="match status" value="1"/>
</dbReference>
<dbReference type="PANTHER" id="PTHR23309:SF9">
    <property type="entry name" value="PEROXISOMAL FATTY ACID BETA-OXIDATION MULTIFUNCTIONAL PROTEIN MFP2"/>
    <property type="match status" value="1"/>
</dbReference>
<dbReference type="Pfam" id="PF00725">
    <property type="entry name" value="3HCDH"/>
    <property type="match status" value="1"/>
</dbReference>
<dbReference type="Pfam" id="PF02737">
    <property type="entry name" value="3HCDH_N"/>
    <property type="match status" value="1"/>
</dbReference>
<dbReference type="Pfam" id="PF00378">
    <property type="entry name" value="ECH_1"/>
    <property type="match status" value="1"/>
</dbReference>
<dbReference type="SUPFAM" id="SSF48179">
    <property type="entry name" value="6-phosphogluconate dehydrogenase C-terminal domain-like"/>
    <property type="match status" value="2"/>
</dbReference>
<dbReference type="SUPFAM" id="SSF52096">
    <property type="entry name" value="ClpP/crotonase"/>
    <property type="match status" value="1"/>
</dbReference>
<dbReference type="SUPFAM" id="SSF51735">
    <property type="entry name" value="NAD(P)-binding Rossmann-fold domains"/>
    <property type="match status" value="1"/>
</dbReference>
<dbReference type="PROSITE" id="PS00067">
    <property type="entry name" value="3HCDH"/>
    <property type="match status" value="1"/>
</dbReference>
<dbReference type="PROSITE" id="PS00166">
    <property type="entry name" value="ENOYL_COA_HYDRATASE"/>
    <property type="match status" value="1"/>
</dbReference>
<evidence type="ECO:0000269" key="1">
    <source>
    </source>
</evidence>
<evidence type="ECO:0000305" key="2"/>
<evidence type="ECO:0000312" key="3">
    <source>
        <dbReference type="EMBL" id="CAA55630.1"/>
    </source>
</evidence>